<feature type="chain" id="PRO_1000190998" description="Ketol-acid reductoisomerase (NADP(+))">
    <location>
        <begin position="1"/>
        <end position="340"/>
    </location>
</feature>
<feature type="domain" description="KARI N-terminal Rossmann" evidence="2">
    <location>
        <begin position="3"/>
        <end position="182"/>
    </location>
</feature>
<feature type="domain" description="KARI C-terminal knotted" evidence="3">
    <location>
        <begin position="183"/>
        <end position="328"/>
    </location>
</feature>
<feature type="active site" evidence="1">
    <location>
        <position position="108"/>
    </location>
</feature>
<feature type="binding site" evidence="1">
    <location>
        <begin position="26"/>
        <end position="29"/>
    </location>
    <ligand>
        <name>NADP(+)</name>
        <dbReference type="ChEBI" id="CHEBI:58349"/>
    </ligand>
</feature>
<feature type="binding site" evidence="1">
    <location>
        <position position="49"/>
    </location>
    <ligand>
        <name>NADP(+)</name>
        <dbReference type="ChEBI" id="CHEBI:58349"/>
    </ligand>
</feature>
<feature type="binding site" evidence="1">
    <location>
        <position position="53"/>
    </location>
    <ligand>
        <name>NADP(+)</name>
        <dbReference type="ChEBI" id="CHEBI:58349"/>
    </ligand>
</feature>
<feature type="binding site" evidence="1">
    <location>
        <begin position="83"/>
        <end position="86"/>
    </location>
    <ligand>
        <name>NADP(+)</name>
        <dbReference type="ChEBI" id="CHEBI:58349"/>
    </ligand>
</feature>
<feature type="binding site" evidence="1">
    <location>
        <position position="134"/>
    </location>
    <ligand>
        <name>NADP(+)</name>
        <dbReference type="ChEBI" id="CHEBI:58349"/>
    </ligand>
</feature>
<feature type="binding site" evidence="1">
    <location>
        <position position="191"/>
    </location>
    <ligand>
        <name>Mg(2+)</name>
        <dbReference type="ChEBI" id="CHEBI:18420"/>
        <label>1</label>
    </ligand>
</feature>
<feature type="binding site" evidence="1">
    <location>
        <position position="191"/>
    </location>
    <ligand>
        <name>Mg(2+)</name>
        <dbReference type="ChEBI" id="CHEBI:18420"/>
        <label>2</label>
    </ligand>
</feature>
<feature type="binding site" evidence="1">
    <location>
        <position position="195"/>
    </location>
    <ligand>
        <name>Mg(2+)</name>
        <dbReference type="ChEBI" id="CHEBI:18420"/>
        <label>1</label>
    </ligand>
</feature>
<feature type="binding site" evidence="1">
    <location>
        <position position="227"/>
    </location>
    <ligand>
        <name>Mg(2+)</name>
        <dbReference type="ChEBI" id="CHEBI:18420"/>
        <label>2</label>
    </ligand>
</feature>
<feature type="binding site" evidence="1">
    <location>
        <position position="231"/>
    </location>
    <ligand>
        <name>Mg(2+)</name>
        <dbReference type="ChEBI" id="CHEBI:18420"/>
        <label>2</label>
    </ligand>
</feature>
<feature type="binding site" evidence="1">
    <location>
        <position position="252"/>
    </location>
    <ligand>
        <name>substrate</name>
    </ligand>
</feature>
<sequence>MTVQMEYEKDVKVAALDGKKIAVIGYGSQGHAHAQNLRDSGRDVIIGVRPGKSFDKAKEDGFDTYTVTEATKLADVIMILAPDEIQQELYEAEIAPNLEAGNAVGFAHGFNIHFEFIKVPADVDVFMCAPKGPGHLVRRTYEEGFGVPALYAVYQDATGNAKNIAMDWCKGVGAARVGLLETTYKEETEEDLFGEQAVLCGGLTALIEAGFEVLTEAGYAPELAYFEVLHEMKLIVDLIYEGGFKKMRQSISNTAEYGDYVSGPRVITEQVKENMKAVLADIQNGKFANDFVNDYKAGRPKLTAYREQAANLEIEKVGAELRKAMPFVGKNDDDAFKIYN</sequence>
<dbReference type="EC" id="1.1.1.86" evidence="1"/>
<dbReference type="EMBL" id="CP001033">
    <property type="protein sequence ID" value="ACB89693.1"/>
    <property type="molecule type" value="Genomic_DNA"/>
</dbReference>
<dbReference type="RefSeq" id="WP_000218061.1">
    <property type="nucleotide sequence ID" value="NC_010582.1"/>
</dbReference>
<dbReference type="SMR" id="B2ILY8"/>
<dbReference type="KEGG" id="spw:SPCG_0441"/>
<dbReference type="HOGENOM" id="CLU_033821_0_1_9"/>
<dbReference type="UniPathway" id="UPA00047">
    <property type="reaction ID" value="UER00056"/>
</dbReference>
<dbReference type="UniPathway" id="UPA00049">
    <property type="reaction ID" value="UER00060"/>
</dbReference>
<dbReference type="GO" id="GO:0005829">
    <property type="term" value="C:cytosol"/>
    <property type="evidence" value="ECO:0007669"/>
    <property type="project" value="TreeGrafter"/>
</dbReference>
<dbReference type="GO" id="GO:0004455">
    <property type="term" value="F:ketol-acid reductoisomerase activity"/>
    <property type="evidence" value="ECO:0007669"/>
    <property type="project" value="UniProtKB-UniRule"/>
</dbReference>
<dbReference type="GO" id="GO:0000287">
    <property type="term" value="F:magnesium ion binding"/>
    <property type="evidence" value="ECO:0007669"/>
    <property type="project" value="UniProtKB-UniRule"/>
</dbReference>
<dbReference type="GO" id="GO:0050661">
    <property type="term" value="F:NADP binding"/>
    <property type="evidence" value="ECO:0007669"/>
    <property type="project" value="InterPro"/>
</dbReference>
<dbReference type="GO" id="GO:0009097">
    <property type="term" value="P:isoleucine biosynthetic process"/>
    <property type="evidence" value="ECO:0007669"/>
    <property type="project" value="UniProtKB-UniRule"/>
</dbReference>
<dbReference type="GO" id="GO:0009099">
    <property type="term" value="P:L-valine biosynthetic process"/>
    <property type="evidence" value="ECO:0007669"/>
    <property type="project" value="UniProtKB-UniRule"/>
</dbReference>
<dbReference type="FunFam" id="3.40.50.720:FF:000023">
    <property type="entry name" value="Ketol-acid reductoisomerase (NADP(+))"/>
    <property type="match status" value="1"/>
</dbReference>
<dbReference type="Gene3D" id="6.10.240.10">
    <property type="match status" value="1"/>
</dbReference>
<dbReference type="Gene3D" id="3.40.50.720">
    <property type="entry name" value="NAD(P)-binding Rossmann-like Domain"/>
    <property type="match status" value="1"/>
</dbReference>
<dbReference type="HAMAP" id="MF_00435">
    <property type="entry name" value="IlvC"/>
    <property type="match status" value="1"/>
</dbReference>
<dbReference type="InterPro" id="IPR008927">
    <property type="entry name" value="6-PGluconate_DH-like_C_sf"/>
</dbReference>
<dbReference type="InterPro" id="IPR013023">
    <property type="entry name" value="KARI"/>
</dbReference>
<dbReference type="InterPro" id="IPR000506">
    <property type="entry name" value="KARI_C"/>
</dbReference>
<dbReference type="InterPro" id="IPR013116">
    <property type="entry name" value="KARI_N"/>
</dbReference>
<dbReference type="InterPro" id="IPR014359">
    <property type="entry name" value="KARI_prok"/>
</dbReference>
<dbReference type="InterPro" id="IPR036291">
    <property type="entry name" value="NAD(P)-bd_dom_sf"/>
</dbReference>
<dbReference type="NCBIfam" id="TIGR00465">
    <property type="entry name" value="ilvC"/>
    <property type="match status" value="1"/>
</dbReference>
<dbReference type="NCBIfam" id="NF004017">
    <property type="entry name" value="PRK05479.1"/>
    <property type="match status" value="1"/>
</dbReference>
<dbReference type="NCBIfam" id="NF009940">
    <property type="entry name" value="PRK13403.1"/>
    <property type="match status" value="1"/>
</dbReference>
<dbReference type="PANTHER" id="PTHR21371">
    <property type="entry name" value="KETOL-ACID REDUCTOISOMERASE, MITOCHONDRIAL"/>
    <property type="match status" value="1"/>
</dbReference>
<dbReference type="PANTHER" id="PTHR21371:SF1">
    <property type="entry name" value="KETOL-ACID REDUCTOISOMERASE, MITOCHONDRIAL"/>
    <property type="match status" value="1"/>
</dbReference>
<dbReference type="Pfam" id="PF01450">
    <property type="entry name" value="KARI_C"/>
    <property type="match status" value="1"/>
</dbReference>
<dbReference type="Pfam" id="PF07991">
    <property type="entry name" value="KARI_N"/>
    <property type="match status" value="1"/>
</dbReference>
<dbReference type="PIRSF" id="PIRSF000116">
    <property type="entry name" value="IlvC_gammaproteo"/>
    <property type="match status" value="1"/>
</dbReference>
<dbReference type="SUPFAM" id="SSF48179">
    <property type="entry name" value="6-phosphogluconate dehydrogenase C-terminal domain-like"/>
    <property type="match status" value="1"/>
</dbReference>
<dbReference type="SUPFAM" id="SSF51735">
    <property type="entry name" value="NAD(P)-binding Rossmann-fold domains"/>
    <property type="match status" value="1"/>
</dbReference>
<dbReference type="PROSITE" id="PS51851">
    <property type="entry name" value="KARI_C"/>
    <property type="match status" value="1"/>
</dbReference>
<dbReference type="PROSITE" id="PS51850">
    <property type="entry name" value="KARI_N"/>
    <property type="match status" value="1"/>
</dbReference>
<gene>
    <name evidence="1" type="primary">ilvC</name>
    <name type="ordered locus">SPCG_0441</name>
</gene>
<name>ILVC_STRPS</name>
<organism>
    <name type="scientific">Streptococcus pneumoniae (strain CGSP14)</name>
    <dbReference type="NCBI Taxonomy" id="516950"/>
    <lineage>
        <taxon>Bacteria</taxon>
        <taxon>Bacillati</taxon>
        <taxon>Bacillota</taxon>
        <taxon>Bacilli</taxon>
        <taxon>Lactobacillales</taxon>
        <taxon>Streptococcaceae</taxon>
        <taxon>Streptococcus</taxon>
    </lineage>
</organism>
<evidence type="ECO:0000255" key="1">
    <source>
        <dbReference type="HAMAP-Rule" id="MF_00435"/>
    </source>
</evidence>
<evidence type="ECO:0000255" key="2">
    <source>
        <dbReference type="PROSITE-ProRule" id="PRU01197"/>
    </source>
</evidence>
<evidence type="ECO:0000255" key="3">
    <source>
        <dbReference type="PROSITE-ProRule" id="PRU01198"/>
    </source>
</evidence>
<protein>
    <recommendedName>
        <fullName evidence="1">Ketol-acid reductoisomerase (NADP(+))</fullName>
        <shortName evidence="1">KARI</shortName>
        <ecNumber evidence="1">1.1.1.86</ecNumber>
    </recommendedName>
    <alternativeName>
        <fullName evidence="1">Acetohydroxy-acid isomeroreductase</fullName>
        <shortName evidence="1">AHIR</shortName>
    </alternativeName>
    <alternativeName>
        <fullName evidence="1">Alpha-keto-beta-hydroxylacyl reductoisomerase</fullName>
    </alternativeName>
    <alternativeName>
        <fullName evidence="1">Ketol-acid reductoisomerase type 1</fullName>
    </alternativeName>
    <alternativeName>
        <fullName evidence="1">Ketol-acid reductoisomerase type I</fullName>
    </alternativeName>
</protein>
<comment type="function">
    <text evidence="1">Involved in the biosynthesis of branched-chain amino acids (BCAA). Catalyzes an alkyl-migration followed by a ketol-acid reduction of (S)-2-acetolactate (S2AL) to yield (R)-2,3-dihydroxy-isovalerate. In the isomerase reaction, S2AL is rearranged via a Mg-dependent methyl migration to produce 3-hydroxy-3-methyl-2-ketobutyrate (HMKB). In the reductase reaction, this 2-ketoacid undergoes a metal-dependent reduction by NADPH to yield (R)-2,3-dihydroxy-isovalerate.</text>
</comment>
<comment type="catalytic activity">
    <reaction evidence="1">
        <text>(2R)-2,3-dihydroxy-3-methylbutanoate + NADP(+) = (2S)-2-acetolactate + NADPH + H(+)</text>
        <dbReference type="Rhea" id="RHEA:22068"/>
        <dbReference type="ChEBI" id="CHEBI:15378"/>
        <dbReference type="ChEBI" id="CHEBI:49072"/>
        <dbReference type="ChEBI" id="CHEBI:57783"/>
        <dbReference type="ChEBI" id="CHEBI:58349"/>
        <dbReference type="ChEBI" id="CHEBI:58476"/>
        <dbReference type="EC" id="1.1.1.86"/>
    </reaction>
</comment>
<comment type="catalytic activity">
    <reaction evidence="1">
        <text>(2R,3R)-2,3-dihydroxy-3-methylpentanoate + NADP(+) = (S)-2-ethyl-2-hydroxy-3-oxobutanoate + NADPH + H(+)</text>
        <dbReference type="Rhea" id="RHEA:13493"/>
        <dbReference type="ChEBI" id="CHEBI:15378"/>
        <dbReference type="ChEBI" id="CHEBI:49256"/>
        <dbReference type="ChEBI" id="CHEBI:49258"/>
        <dbReference type="ChEBI" id="CHEBI:57783"/>
        <dbReference type="ChEBI" id="CHEBI:58349"/>
        <dbReference type="EC" id="1.1.1.86"/>
    </reaction>
</comment>
<comment type="cofactor">
    <cofactor evidence="1">
        <name>Mg(2+)</name>
        <dbReference type="ChEBI" id="CHEBI:18420"/>
    </cofactor>
    <text evidence="1">Binds 2 magnesium ions per subunit.</text>
</comment>
<comment type="pathway">
    <text evidence="1">Amino-acid biosynthesis; L-isoleucine biosynthesis; L-isoleucine from 2-oxobutanoate: step 2/4.</text>
</comment>
<comment type="pathway">
    <text evidence="1">Amino-acid biosynthesis; L-valine biosynthesis; L-valine from pyruvate: step 2/4.</text>
</comment>
<comment type="similarity">
    <text evidence="1">Belongs to the ketol-acid reductoisomerase family.</text>
</comment>
<reference key="1">
    <citation type="journal article" date="2009" name="BMC Genomics">
        <title>Genome evolution driven by host adaptations results in a more virulent and antimicrobial-resistant Streptococcus pneumoniae serotype 14.</title>
        <authorList>
            <person name="Ding F."/>
            <person name="Tang P."/>
            <person name="Hsu M.-H."/>
            <person name="Cui P."/>
            <person name="Hu S."/>
            <person name="Yu J."/>
            <person name="Chiu C.-H."/>
        </authorList>
    </citation>
    <scope>NUCLEOTIDE SEQUENCE [LARGE SCALE GENOMIC DNA]</scope>
    <source>
        <strain>CGSP14</strain>
    </source>
</reference>
<proteinExistence type="inferred from homology"/>
<accession>B2ILY8</accession>
<keyword id="KW-0028">Amino-acid biosynthesis</keyword>
<keyword id="KW-0100">Branched-chain amino acid biosynthesis</keyword>
<keyword id="KW-0460">Magnesium</keyword>
<keyword id="KW-0479">Metal-binding</keyword>
<keyword id="KW-0521">NADP</keyword>
<keyword id="KW-0560">Oxidoreductase</keyword>